<evidence type="ECO:0000255" key="1">
    <source>
        <dbReference type="HAMAP-Rule" id="MF_00519"/>
    </source>
</evidence>
<protein>
    <recommendedName>
        <fullName evidence="1">L-arabinose isomerase</fullName>
        <ecNumber evidence="1">5.3.1.4</ecNumber>
    </recommendedName>
</protein>
<reference key="1">
    <citation type="submission" date="2009-05" db="EMBL/GenBank/DDBJ databases">
        <title>Complete sequence of Tolumonas auensis DSM 9187.</title>
        <authorList>
            <consortium name="US DOE Joint Genome Institute"/>
            <person name="Lucas S."/>
            <person name="Copeland A."/>
            <person name="Lapidus A."/>
            <person name="Glavina del Rio T."/>
            <person name="Tice H."/>
            <person name="Bruce D."/>
            <person name="Goodwin L."/>
            <person name="Pitluck S."/>
            <person name="Chertkov O."/>
            <person name="Brettin T."/>
            <person name="Detter J.C."/>
            <person name="Han C."/>
            <person name="Larimer F."/>
            <person name="Land M."/>
            <person name="Hauser L."/>
            <person name="Kyrpides N."/>
            <person name="Mikhailova N."/>
            <person name="Spring S."/>
            <person name="Beller H."/>
        </authorList>
    </citation>
    <scope>NUCLEOTIDE SEQUENCE [LARGE SCALE GENOMIC DNA]</scope>
    <source>
        <strain>DSM 9187 / NBRC 110442 / TA 4</strain>
    </source>
</reference>
<comment type="function">
    <text evidence="1">Catalyzes the conversion of L-arabinose to L-ribulose.</text>
</comment>
<comment type="catalytic activity">
    <reaction evidence="1">
        <text>beta-L-arabinopyranose = L-ribulose</text>
        <dbReference type="Rhea" id="RHEA:14821"/>
        <dbReference type="ChEBI" id="CHEBI:16880"/>
        <dbReference type="ChEBI" id="CHEBI:40886"/>
        <dbReference type="EC" id="5.3.1.4"/>
    </reaction>
</comment>
<comment type="cofactor">
    <cofactor evidence="1">
        <name>Mn(2+)</name>
        <dbReference type="ChEBI" id="CHEBI:29035"/>
    </cofactor>
    <text evidence="1">Binds 1 Mn(2+) ion per subunit.</text>
</comment>
<comment type="pathway">
    <text evidence="1">Carbohydrate degradation; L-arabinose degradation via L-ribulose; D-xylulose 5-phosphate from L-arabinose (bacterial route): step 1/3.</text>
</comment>
<comment type="similarity">
    <text evidence="1">Belongs to the arabinose isomerase family.</text>
</comment>
<name>ARAA_TOLAT</name>
<organism>
    <name type="scientific">Tolumonas auensis (strain DSM 9187 / NBRC 110442 / TA 4)</name>
    <dbReference type="NCBI Taxonomy" id="595494"/>
    <lineage>
        <taxon>Bacteria</taxon>
        <taxon>Pseudomonadati</taxon>
        <taxon>Pseudomonadota</taxon>
        <taxon>Gammaproteobacteria</taxon>
        <taxon>Aeromonadales</taxon>
        <taxon>Aeromonadaceae</taxon>
        <taxon>Tolumonas</taxon>
    </lineage>
</organism>
<gene>
    <name evidence="1" type="primary">araA</name>
    <name type="ordered locus">Tola_2162</name>
</gene>
<proteinExistence type="inferred from homology"/>
<keyword id="KW-0054">Arabinose catabolism</keyword>
<keyword id="KW-0119">Carbohydrate metabolism</keyword>
<keyword id="KW-0413">Isomerase</keyword>
<keyword id="KW-0464">Manganese</keyword>
<keyword id="KW-0479">Metal-binding</keyword>
<keyword id="KW-1185">Reference proteome</keyword>
<accession>C4L8B5</accession>
<dbReference type="EC" id="5.3.1.4" evidence="1"/>
<dbReference type="EMBL" id="CP001616">
    <property type="protein sequence ID" value="ACQ93761.1"/>
    <property type="molecule type" value="Genomic_DNA"/>
</dbReference>
<dbReference type="RefSeq" id="WP_015879229.1">
    <property type="nucleotide sequence ID" value="NC_012691.1"/>
</dbReference>
<dbReference type="SMR" id="C4L8B5"/>
<dbReference type="STRING" id="595494.Tola_2162"/>
<dbReference type="KEGG" id="tau:Tola_2162"/>
<dbReference type="eggNOG" id="COG2160">
    <property type="taxonomic scope" value="Bacteria"/>
</dbReference>
<dbReference type="HOGENOM" id="CLU_045663_0_0_6"/>
<dbReference type="OrthoDB" id="9765600at2"/>
<dbReference type="UniPathway" id="UPA00145">
    <property type="reaction ID" value="UER00565"/>
</dbReference>
<dbReference type="Proteomes" id="UP000009073">
    <property type="component" value="Chromosome"/>
</dbReference>
<dbReference type="GO" id="GO:0005829">
    <property type="term" value="C:cytosol"/>
    <property type="evidence" value="ECO:0007669"/>
    <property type="project" value="TreeGrafter"/>
</dbReference>
<dbReference type="GO" id="GO:0008733">
    <property type="term" value="F:L-arabinose isomerase activity"/>
    <property type="evidence" value="ECO:0007669"/>
    <property type="project" value="UniProtKB-UniRule"/>
</dbReference>
<dbReference type="GO" id="GO:0030145">
    <property type="term" value="F:manganese ion binding"/>
    <property type="evidence" value="ECO:0007669"/>
    <property type="project" value="UniProtKB-UniRule"/>
</dbReference>
<dbReference type="GO" id="GO:0019569">
    <property type="term" value="P:L-arabinose catabolic process to xylulose 5-phosphate"/>
    <property type="evidence" value="ECO:0007669"/>
    <property type="project" value="UniProtKB-UniRule"/>
</dbReference>
<dbReference type="CDD" id="cd03557">
    <property type="entry name" value="L-arabinose_isomerase"/>
    <property type="match status" value="1"/>
</dbReference>
<dbReference type="Gene3D" id="3.40.50.10940">
    <property type="match status" value="1"/>
</dbReference>
<dbReference type="HAMAP" id="MF_00519">
    <property type="entry name" value="Arabinose_Isome"/>
    <property type="match status" value="1"/>
</dbReference>
<dbReference type="InterPro" id="IPR024664">
    <property type="entry name" value="Ara_Isoase_C"/>
</dbReference>
<dbReference type="InterPro" id="IPR055390">
    <property type="entry name" value="AraA_central"/>
</dbReference>
<dbReference type="InterPro" id="IPR055389">
    <property type="entry name" value="AraA_N"/>
</dbReference>
<dbReference type="InterPro" id="IPR038583">
    <property type="entry name" value="AraA_N_sf"/>
</dbReference>
<dbReference type="InterPro" id="IPR004216">
    <property type="entry name" value="Fuc/Ara_isomerase_C"/>
</dbReference>
<dbReference type="InterPro" id="IPR009015">
    <property type="entry name" value="Fucose_isomerase_N/cen_sf"/>
</dbReference>
<dbReference type="InterPro" id="IPR003762">
    <property type="entry name" value="Lara_isomerase"/>
</dbReference>
<dbReference type="NCBIfam" id="NF002795">
    <property type="entry name" value="PRK02929.1"/>
    <property type="match status" value="1"/>
</dbReference>
<dbReference type="PANTHER" id="PTHR38464">
    <property type="entry name" value="L-ARABINOSE ISOMERASE"/>
    <property type="match status" value="1"/>
</dbReference>
<dbReference type="PANTHER" id="PTHR38464:SF1">
    <property type="entry name" value="L-ARABINOSE ISOMERASE"/>
    <property type="match status" value="1"/>
</dbReference>
<dbReference type="Pfam" id="PF24856">
    <property type="entry name" value="AraA_central"/>
    <property type="match status" value="1"/>
</dbReference>
<dbReference type="Pfam" id="PF02610">
    <property type="entry name" value="AraA_N"/>
    <property type="match status" value="1"/>
</dbReference>
<dbReference type="Pfam" id="PF11762">
    <property type="entry name" value="Arabinose_Iso_C"/>
    <property type="match status" value="1"/>
</dbReference>
<dbReference type="PIRSF" id="PIRSF001478">
    <property type="entry name" value="L-ara_isomerase"/>
    <property type="match status" value="1"/>
</dbReference>
<dbReference type="SUPFAM" id="SSF50443">
    <property type="entry name" value="FucI/AraA C-terminal domain-like"/>
    <property type="match status" value="1"/>
</dbReference>
<dbReference type="SUPFAM" id="SSF53743">
    <property type="entry name" value="FucI/AraA N-terminal and middle domains"/>
    <property type="match status" value="1"/>
</dbReference>
<feature type="chain" id="PRO_1000211743" description="L-arabinose isomerase">
    <location>
        <begin position="1"/>
        <end position="499"/>
    </location>
</feature>
<feature type="binding site" evidence="1">
    <location>
        <position position="306"/>
    </location>
    <ligand>
        <name>Mn(2+)</name>
        <dbReference type="ChEBI" id="CHEBI:29035"/>
    </ligand>
</feature>
<feature type="binding site" evidence="1">
    <location>
        <position position="333"/>
    </location>
    <ligand>
        <name>Mn(2+)</name>
        <dbReference type="ChEBI" id="CHEBI:29035"/>
    </ligand>
</feature>
<feature type="binding site" evidence="1">
    <location>
        <position position="350"/>
    </location>
    <ligand>
        <name>Mn(2+)</name>
        <dbReference type="ChEBI" id="CHEBI:29035"/>
    </ligand>
</feature>
<feature type="binding site" evidence="1">
    <location>
        <position position="449"/>
    </location>
    <ligand>
        <name>Mn(2+)</name>
        <dbReference type="ChEBI" id="CHEBI:29035"/>
    </ligand>
</feature>
<sequence>MEFLKQLEVWFVVGSQHLYGAETLKQVADHAQTITNQLNEKAGLPLKIVLKPTGTTLDEISAIARDANHSEQCVGVMVWMHTFSPAKMWIPALSQLNKPLLQFHTQFNKDLPWGEIDMDFMNLNQTAHGGREFGFMGARLRLPRTVVVGYWEDKGAHEKIARWMRIAAAVYDSRKMKVARFGDNMRNVAVTEGDKVEAQIQFGYQVNYHPVGDLVKVINDVSTGDINALLDEYETIYTLTDAVKMGGAYRESLYEAARQELGMKKFLQDGGFGAFTTTFEDLYGIHQLPGLACQRLMQQGYGFGGEGDWKTAALLRTLKVMGTGLPGGTSFMEDYTYHLEDGNNLVLGAHMLEVCPSIASKKPVLDVQRLGIGQKAPPARLLFSAPAGKAVNASLIDMGNRFRLVVNNLDVVDLPQSLPKLPVACALWEPKPNLEVGAEAWILAGAAHHSVFSQAVDAEYLRTFAEMMGIEFLLIDENTTIPELKKEILWNEVYYKLCK</sequence>